<reference key="1">
    <citation type="journal article" date="2004" name="Genome Res.">
        <title>The status, quality, and expansion of the NIH full-length cDNA project: the Mammalian Gene Collection (MGC).</title>
        <authorList>
            <consortium name="The MGC Project Team"/>
        </authorList>
    </citation>
    <scope>NUCLEOTIDE SEQUENCE [LARGE SCALE MRNA]</scope>
    <source>
        <tissue>Kidney</tissue>
    </source>
</reference>
<evidence type="ECO:0000250" key="1"/>
<evidence type="ECO:0000255" key="2"/>
<evidence type="ECO:0000305" key="3"/>
<evidence type="ECO:0000312" key="4">
    <source>
        <dbReference type="RGD" id="1309721"/>
    </source>
</evidence>
<sequence length="242" mass="26761">MSRYQAALLGLGLLLMFLLYMGLPGPPKQTSQLGRGPNVTVLTGLTRGSSQIFYREVLPLQQTHRAEVVFLHGKAFNSHTWEQLGTLQLLSKRGYRAVAVDLPGFGNSAPSKEVSTESGRVELLEGVLRDLQLQNTVLVSPSLSGSYALPFLMQSHHQLCGFVPIAPTSTRNYAQEQFQAVKTPTLILYGELDHTLARESLQQLRHLPNHSVVKLHNAGHACYLHKPEAFHLALLAFLDHLP</sequence>
<organism>
    <name type="scientific">Rattus norvegicus</name>
    <name type="common">Rat</name>
    <dbReference type="NCBI Taxonomy" id="10116"/>
    <lineage>
        <taxon>Eukaryota</taxon>
        <taxon>Metazoa</taxon>
        <taxon>Chordata</taxon>
        <taxon>Craniata</taxon>
        <taxon>Vertebrata</taxon>
        <taxon>Euteleostomi</taxon>
        <taxon>Mammalia</taxon>
        <taxon>Eutheria</taxon>
        <taxon>Euarchontoglires</taxon>
        <taxon>Glires</taxon>
        <taxon>Rodentia</taxon>
        <taxon>Myomorpha</taxon>
        <taxon>Muroidea</taxon>
        <taxon>Muridae</taxon>
        <taxon>Murinae</taxon>
        <taxon>Rattus</taxon>
    </lineage>
</organism>
<keyword id="KW-0963">Cytoplasm</keyword>
<keyword id="KW-0325">Glycoprotein</keyword>
<keyword id="KW-0378">Hydrolase</keyword>
<keyword id="KW-0472">Membrane</keyword>
<keyword id="KW-1185">Reference proteome</keyword>
<keyword id="KW-0735">Signal-anchor</keyword>
<keyword id="KW-0812">Transmembrane</keyword>
<keyword id="KW-1133">Transmembrane helix</keyword>
<dbReference type="EC" id="3.-.-.-"/>
<dbReference type="EMBL" id="BC088472">
    <property type="protein sequence ID" value="AAH88472.1"/>
    <property type="molecule type" value="mRNA"/>
</dbReference>
<dbReference type="RefSeq" id="NP_001009670.1">
    <property type="nucleotide sequence ID" value="NM_001009670.1"/>
</dbReference>
<dbReference type="RefSeq" id="XP_006243779.1">
    <property type="nucleotide sequence ID" value="XM_006243717.3"/>
</dbReference>
<dbReference type="RefSeq" id="XP_006243782.1">
    <property type="nucleotide sequence ID" value="XM_006243720.3"/>
</dbReference>
<dbReference type="RefSeq" id="XP_008764716.1">
    <property type="nucleotide sequence ID" value="XM_008766494.2"/>
</dbReference>
<dbReference type="RefSeq" id="XP_008764717.1">
    <property type="nucleotide sequence ID" value="XM_008766495.2"/>
</dbReference>
<dbReference type="RefSeq" id="XP_008764718.1">
    <property type="nucleotide sequence ID" value="XM_008766496.2"/>
</dbReference>
<dbReference type="RefSeq" id="XP_008764720.1">
    <property type="nucleotide sequence ID" value="XM_008766498.2"/>
</dbReference>
<dbReference type="SMR" id="Q5I0C4"/>
<dbReference type="FunCoup" id="Q5I0C4">
    <property type="interactions" value="31"/>
</dbReference>
<dbReference type="STRING" id="10116.ENSRNOP00000016056"/>
<dbReference type="ESTHER" id="rat-abhea">
    <property type="family name" value="CIB-CCG1-interacting-factor-B"/>
</dbReference>
<dbReference type="MEROPS" id="S33.981"/>
<dbReference type="GlyCosmos" id="Q5I0C4">
    <property type="glycosylation" value="1 site, No reported glycans"/>
</dbReference>
<dbReference type="GlyGen" id="Q5I0C4">
    <property type="glycosylation" value="2 sites"/>
</dbReference>
<dbReference type="PhosphoSitePlus" id="Q5I0C4"/>
<dbReference type="PaxDb" id="10116-ENSRNOP00000016056"/>
<dbReference type="GeneID" id="300982"/>
<dbReference type="KEGG" id="rno:300982"/>
<dbReference type="UCSC" id="RGD:1309721">
    <property type="organism name" value="rat"/>
</dbReference>
<dbReference type="AGR" id="RGD:1309721"/>
<dbReference type="CTD" id="25864"/>
<dbReference type="RGD" id="1309721">
    <property type="gene designation" value="Abhd14a"/>
</dbReference>
<dbReference type="VEuPathDB" id="HostDB:ENSRNOG00000011936"/>
<dbReference type="eggNOG" id="ENOG502QR0B">
    <property type="taxonomic scope" value="Eukaryota"/>
</dbReference>
<dbReference type="InParanoid" id="Q5I0C4"/>
<dbReference type="PhylomeDB" id="Q5I0C4"/>
<dbReference type="PRO" id="PR:Q5I0C4"/>
<dbReference type="Proteomes" id="UP000002494">
    <property type="component" value="Chromosome 8"/>
</dbReference>
<dbReference type="Bgee" id="ENSRNOG00000011936">
    <property type="expression patterns" value="Expressed in kidney and 19 other cell types or tissues"/>
</dbReference>
<dbReference type="ExpressionAtlas" id="Q5I0C4">
    <property type="expression patterns" value="baseline and differential"/>
</dbReference>
<dbReference type="GO" id="GO:0005737">
    <property type="term" value="C:cytoplasm"/>
    <property type="evidence" value="ECO:0000266"/>
    <property type="project" value="RGD"/>
</dbReference>
<dbReference type="GO" id="GO:0016020">
    <property type="term" value="C:membrane"/>
    <property type="evidence" value="ECO:0007669"/>
    <property type="project" value="UniProtKB-SubCell"/>
</dbReference>
<dbReference type="GO" id="GO:0016787">
    <property type="term" value="F:hydrolase activity"/>
    <property type="evidence" value="ECO:0007669"/>
    <property type="project" value="UniProtKB-KW"/>
</dbReference>
<dbReference type="FunFam" id="3.40.50.1820:FF:000093">
    <property type="entry name" value="protein ABHD14A isoform X1"/>
    <property type="match status" value="1"/>
</dbReference>
<dbReference type="Gene3D" id="3.40.50.1820">
    <property type="entry name" value="alpha/beta hydrolase"/>
    <property type="match status" value="1"/>
</dbReference>
<dbReference type="InterPro" id="IPR000073">
    <property type="entry name" value="AB_hydrolase_1"/>
</dbReference>
<dbReference type="InterPro" id="IPR029058">
    <property type="entry name" value="AB_hydrolase_fold"/>
</dbReference>
<dbReference type="PANTHER" id="PTHR46197:SF1">
    <property type="entry name" value="PROTEIN ABHD14A"/>
    <property type="match status" value="1"/>
</dbReference>
<dbReference type="PANTHER" id="PTHR46197">
    <property type="entry name" value="PROTEIN ABHD14B-LIKE"/>
    <property type="match status" value="1"/>
</dbReference>
<dbReference type="Pfam" id="PF12697">
    <property type="entry name" value="Abhydrolase_6"/>
    <property type="match status" value="1"/>
</dbReference>
<dbReference type="SUPFAM" id="SSF53474">
    <property type="entry name" value="alpha/beta-Hydrolases"/>
    <property type="match status" value="1"/>
</dbReference>
<name>ABHEA_RAT</name>
<feature type="chain" id="PRO_0000282287" description="Protein ABHD14A">
    <location>
        <begin position="1"/>
        <end position="242"/>
    </location>
</feature>
<feature type="transmembrane region" description="Helical; Signal-anchor for type II membrane protein" evidence="2">
    <location>
        <begin position="6"/>
        <end position="26"/>
    </location>
</feature>
<feature type="active site" description="Charge relay system" evidence="1">
    <location>
        <position position="142"/>
    </location>
</feature>
<feature type="active site" description="Charge relay system" evidence="1">
    <location>
        <position position="193"/>
    </location>
</feature>
<feature type="active site" description="Charge relay system" evidence="1">
    <location>
        <position position="220"/>
    </location>
</feature>
<feature type="glycosylation site" description="N-linked (GlcNAc...) asparagine" evidence="2">
    <location>
        <position position="38"/>
    </location>
</feature>
<proteinExistence type="evidence at transcript level"/>
<accession>Q5I0C4</accession>
<comment type="function">
    <text evidence="1">Possible role in granule neuron development.</text>
</comment>
<comment type="subcellular location">
    <subcellularLocation>
        <location evidence="1">Cytoplasm</location>
    </subcellularLocation>
    <subcellularLocation>
        <location evidence="3">Membrane</location>
        <topology evidence="3">Single-pass type II membrane protein</topology>
    </subcellularLocation>
</comment>
<comment type="similarity">
    <text evidence="3">Belongs to the AB hydrolase superfamily. ABHD14 family.</text>
</comment>
<protein>
    <recommendedName>
        <fullName evidence="3">Protein ABHD14A</fullName>
        <ecNumber>3.-.-.-</ecNumber>
    </recommendedName>
    <alternativeName>
        <fullName evidence="3">Alpha/beta hydrolase domain-containing protein 14A</fullName>
        <shortName evidence="4">Abhydrolase domain-containing protein 14A</shortName>
    </alternativeName>
</protein>
<gene>
    <name evidence="4" type="primary">Abhd14a</name>
</gene>